<gene>
    <name evidence="1" type="primary">lgt</name>
    <name type="ordered locus">RF_0133</name>
</gene>
<feature type="chain" id="PRO_0000277926" description="Phosphatidylglycerol--prolipoprotein diacylglyceryl transferase">
    <location>
        <begin position="1"/>
        <end position="259"/>
    </location>
</feature>
<feature type="transmembrane region" description="Helical" evidence="1">
    <location>
        <begin position="9"/>
        <end position="29"/>
    </location>
</feature>
<feature type="transmembrane region" description="Helical" evidence="1">
    <location>
        <begin position="55"/>
        <end position="75"/>
    </location>
</feature>
<feature type="transmembrane region" description="Helical" evidence="1">
    <location>
        <begin position="92"/>
        <end position="112"/>
    </location>
</feature>
<feature type="transmembrane region" description="Helical" evidence="1">
    <location>
        <begin position="117"/>
        <end position="137"/>
    </location>
</feature>
<feature type="transmembrane region" description="Helical" evidence="1">
    <location>
        <begin position="172"/>
        <end position="192"/>
    </location>
</feature>
<feature type="transmembrane region" description="Helical" evidence="1">
    <location>
        <begin position="201"/>
        <end position="221"/>
    </location>
</feature>
<feature type="transmembrane region" description="Helical" evidence="1">
    <location>
        <begin position="228"/>
        <end position="248"/>
    </location>
</feature>
<feature type="binding site" evidence="1">
    <location>
        <position position="138"/>
    </location>
    <ligand>
        <name>a 1,2-diacyl-sn-glycero-3-phospho-(1'-sn-glycerol)</name>
        <dbReference type="ChEBI" id="CHEBI:64716"/>
    </ligand>
</feature>
<name>LGT_RICFE</name>
<keyword id="KW-0997">Cell inner membrane</keyword>
<keyword id="KW-1003">Cell membrane</keyword>
<keyword id="KW-0472">Membrane</keyword>
<keyword id="KW-0808">Transferase</keyword>
<keyword id="KW-0812">Transmembrane</keyword>
<keyword id="KW-1133">Transmembrane helix</keyword>
<accession>Q4UN74</accession>
<evidence type="ECO:0000255" key="1">
    <source>
        <dbReference type="HAMAP-Rule" id="MF_01147"/>
    </source>
</evidence>
<reference key="1">
    <citation type="journal article" date="2005" name="PLoS Biol.">
        <title>The genome sequence of Rickettsia felis identifies the first putative conjugative plasmid in an obligate intracellular parasite.</title>
        <authorList>
            <person name="Ogata H."/>
            <person name="Renesto P."/>
            <person name="Audic S."/>
            <person name="Robert C."/>
            <person name="Blanc G."/>
            <person name="Fournier P.-E."/>
            <person name="Parinello H."/>
            <person name="Claverie J.-M."/>
            <person name="Raoult D."/>
        </authorList>
    </citation>
    <scope>NUCLEOTIDE SEQUENCE [LARGE SCALE GENOMIC DNA]</scope>
    <source>
        <strain>ATCC VR-1525 / URRWXCal2</strain>
    </source>
</reference>
<sequence>MTFPNINPIIFSIGPLAVSWYSLSYVVGILLGWFYANKIIEKFKPQITKKNLEDFITYAVIGIIVGGRLGFVLLYNPSRYFSNPIDILKTYEGGMSFHGGALGVIIAAYLFCRKYKINFLSLTDIIAPVVPIGLFLGRIANFINGELYGRITNSSFGMIFPNSDLMPRHPSQLYEAFFEGLVLFCILAYATFKHKTLKKYGLNSGIFLIFYALFRIAIEIFREPDIQIGFILDSLTMGQILSVPMLLLGSYLICQSNPK</sequence>
<proteinExistence type="inferred from homology"/>
<dbReference type="EC" id="2.5.1.145" evidence="1"/>
<dbReference type="EMBL" id="CP000053">
    <property type="protein sequence ID" value="AAY60984.1"/>
    <property type="molecule type" value="Genomic_DNA"/>
</dbReference>
<dbReference type="SMR" id="Q4UN74"/>
<dbReference type="STRING" id="315456.RF_0133"/>
<dbReference type="KEGG" id="rfe:RF_0133"/>
<dbReference type="eggNOG" id="COG0682">
    <property type="taxonomic scope" value="Bacteria"/>
</dbReference>
<dbReference type="HOGENOM" id="CLU_013386_1_0_5"/>
<dbReference type="OrthoDB" id="871140at2"/>
<dbReference type="UniPathway" id="UPA00664"/>
<dbReference type="Proteomes" id="UP000008548">
    <property type="component" value="Chromosome"/>
</dbReference>
<dbReference type="GO" id="GO:0005886">
    <property type="term" value="C:plasma membrane"/>
    <property type="evidence" value="ECO:0007669"/>
    <property type="project" value="UniProtKB-SubCell"/>
</dbReference>
<dbReference type="GO" id="GO:0008961">
    <property type="term" value="F:phosphatidylglycerol-prolipoprotein diacylglyceryl transferase activity"/>
    <property type="evidence" value="ECO:0007669"/>
    <property type="project" value="UniProtKB-UniRule"/>
</dbReference>
<dbReference type="GO" id="GO:0042158">
    <property type="term" value="P:lipoprotein biosynthetic process"/>
    <property type="evidence" value="ECO:0007669"/>
    <property type="project" value="UniProtKB-UniRule"/>
</dbReference>
<dbReference type="HAMAP" id="MF_01147">
    <property type="entry name" value="Lgt"/>
    <property type="match status" value="1"/>
</dbReference>
<dbReference type="InterPro" id="IPR001640">
    <property type="entry name" value="Lgt"/>
</dbReference>
<dbReference type="NCBIfam" id="TIGR00544">
    <property type="entry name" value="lgt"/>
    <property type="match status" value="1"/>
</dbReference>
<dbReference type="PANTHER" id="PTHR30589:SF0">
    <property type="entry name" value="PHOSPHATIDYLGLYCEROL--PROLIPOPROTEIN DIACYLGLYCERYL TRANSFERASE"/>
    <property type="match status" value="1"/>
</dbReference>
<dbReference type="PANTHER" id="PTHR30589">
    <property type="entry name" value="PROLIPOPROTEIN DIACYLGLYCERYL TRANSFERASE"/>
    <property type="match status" value="1"/>
</dbReference>
<dbReference type="Pfam" id="PF01790">
    <property type="entry name" value="LGT"/>
    <property type="match status" value="1"/>
</dbReference>
<dbReference type="PROSITE" id="PS01311">
    <property type="entry name" value="LGT"/>
    <property type="match status" value="1"/>
</dbReference>
<comment type="function">
    <text evidence="1">Catalyzes the transfer of the diacylglyceryl group from phosphatidylglycerol to the sulfhydryl group of the N-terminal cysteine of a prolipoprotein, the first step in the formation of mature lipoproteins.</text>
</comment>
<comment type="catalytic activity">
    <reaction evidence="1">
        <text>L-cysteinyl-[prolipoprotein] + a 1,2-diacyl-sn-glycero-3-phospho-(1'-sn-glycerol) = an S-1,2-diacyl-sn-glyceryl-L-cysteinyl-[prolipoprotein] + sn-glycerol 1-phosphate + H(+)</text>
        <dbReference type="Rhea" id="RHEA:56712"/>
        <dbReference type="Rhea" id="RHEA-COMP:14679"/>
        <dbReference type="Rhea" id="RHEA-COMP:14680"/>
        <dbReference type="ChEBI" id="CHEBI:15378"/>
        <dbReference type="ChEBI" id="CHEBI:29950"/>
        <dbReference type="ChEBI" id="CHEBI:57685"/>
        <dbReference type="ChEBI" id="CHEBI:64716"/>
        <dbReference type="ChEBI" id="CHEBI:140658"/>
        <dbReference type="EC" id="2.5.1.145"/>
    </reaction>
</comment>
<comment type="pathway">
    <text evidence="1">Protein modification; lipoprotein biosynthesis (diacylglyceryl transfer).</text>
</comment>
<comment type="subcellular location">
    <subcellularLocation>
        <location evidence="1">Cell inner membrane</location>
        <topology evidence="1">Multi-pass membrane protein</topology>
    </subcellularLocation>
</comment>
<comment type="similarity">
    <text evidence="1">Belongs to the Lgt family.</text>
</comment>
<organism>
    <name type="scientific">Rickettsia felis (strain ATCC VR-1525 / URRWXCal2)</name>
    <name type="common">Rickettsia azadi</name>
    <dbReference type="NCBI Taxonomy" id="315456"/>
    <lineage>
        <taxon>Bacteria</taxon>
        <taxon>Pseudomonadati</taxon>
        <taxon>Pseudomonadota</taxon>
        <taxon>Alphaproteobacteria</taxon>
        <taxon>Rickettsiales</taxon>
        <taxon>Rickettsiaceae</taxon>
        <taxon>Rickettsieae</taxon>
        <taxon>Rickettsia</taxon>
        <taxon>spotted fever group</taxon>
    </lineage>
</organism>
<protein>
    <recommendedName>
        <fullName evidence="1">Phosphatidylglycerol--prolipoprotein diacylglyceryl transferase</fullName>
        <ecNumber evidence="1">2.5.1.145</ecNumber>
    </recommendedName>
</protein>